<name>KPTA_PYRAE</name>
<evidence type="ECO:0000255" key="1">
    <source>
        <dbReference type="HAMAP-Rule" id="MF_00299"/>
    </source>
</evidence>
<comment type="function">
    <text evidence="1">Removes the 2'-phosphate from RNA via an intermediate in which the phosphate is ADP-ribosylated by NAD followed by a presumed transesterification to release the RNA and generate ADP-ribose 1''-2''-cyclic phosphate (APPR&gt;P). May function as an ADP-ribosylase.</text>
</comment>
<comment type="similarity">
    <text evidence="1">Belongs to the KptA/TPT1 family.</text>
</comment>
<gene>
    <name evidence="1" type="primary">kptA</name>
    <name type="ordered locus">PAE3647</name>
</gene>
<reference key="1">
    <citation type="journal article" date="2002" name="Proc. Natl. Acad. Sci. U.S.A.">
        <title>Genome sequence of the hyperthermophilic crenarchaeon Pyrobaculum aerophilum.</title>
        <authorList>
            <person name="Fitz-Gibbon S.T."/>
            <person name="Ladner H."/>
            <person name="Kim U.-J."/>
            <person name="Stetter K.O."/>
            <person name="Simon M.I."/>
            <person name="Miller J.H."/>
        </authorList>
    </citation>
    <scope>NUCLEOTIDE SEQUENCE [LARGE SCALE GENOMIC DNA]</scope>
    <source>
        <strain>ATCC 51768 / DSM 7523 / JCM 9630 / CIP 104966 / NBRC 100827 / IM2</strain>
    </source>
</reference>
<dbReference type="EC" id="2.7.1.-" evidence="1"/>
<dbReference type="EMBL" id="AE009441">
    <property type="protein sequence ID" value="AAL65071.1"/>
    <property type="molecule type" value="Genomic_DNA"/>
</dbReference>
<dbReference type="SMR" id="Q8ZSP2"/>
<dbReference type="STRING" id="178306.PAE3647"/>
<dbReference type="EnsemblBacteria" id="AAL65071">
    <property type="protein sequence ID" value="AAL65071"/>
    <property type="gene ID" value="PAE3647"/>
</dbReference>
<dbReference type="KEGG" id="pai:PAE3647"/>
<dbReference type="PATRIC" id="fig|178306.9.peg.2752"/>
<dbReference type="eggNOG" id="arCOG04063">
    <property type="taxonomic scope" value="Archaea"/>
</dbReference>
<dbReference type="HOGENOM" id="CLU_052998_4_1_2"/>
<dbReference type="InParanoid" id="Q8ZSP2"/>
<dbReference type="Proteomes" id="UP000002439">
    <property type="component" value="Chromosome"/>
</dbReference>
<dbReference type="GO" id="GO:0003950">
    <property type="term" value="F:NAD+ poly-ADP-ribosyltransferase activity"/>
    <property type="evidence" value="ECO:0007669"/>
    <property type="project" value="InterPro"/>
</dbReference>
<dbReference type="GO" id="GO:0000215">
    <property type="term" value="F:tRNA 2'-phosphotransferase activity"/>
    <property type="evidence" value="ECO:0000318"/>
    <property type="project" value="GO_Central"/>
</dbReference>
<dbReference type="GO" id="GO:0006388">
    <property type="term" value="P:tRNA splicing, via endonucleolytic cleavage and ligation"/>
    <property type="evidence" value="ECO:0000318"/>
    <property type="project" value="GO_Central"/>
</dbReference>
<dbReference type="Gene3D" id="3.20.170.30">
    <property type="match status" value="1"/>
</dbReference>
<dbReference type="Gene3D" id="1.10.10.970">
    <property type="entry name" value="RNA 2'-phosphotransferase, Tpt1/KptA family, N-terminal domain"/>
    <property type="match status" value="1"/>
</dbReference>
<dbReference type="HAMAP" id="MF_00299">
    <property type="entry name" value="KptA"/>
    <property type="match status" value="1"/>
</dbReference>
<dbReference type="InterPro" id="IPR002745">
    <property type="entry name" value="Ptrans_KptA/Tpt1"/>
</dbReference>
<dbReference type="InterPro" id="IPR042081">
    <property type="entry name" value="RNA_2'-PTrans_C"/>
</dbReference>
<dbReference type="InterPro" id="IPR022928">
    <property type="entry name" value="RNA_2'-PTrans_KptA"/>
</dbReference>
<dbReference type="InterPro" id="IPR042080">
    <property type="entry name" value="RNA_2'-PTrans_N"/>
</dbReference>
<dbReference type="PANTHER" id="PTHR12684">
    <property type="entry name" value="PUTATIVE PHOSPHOTRANSFERASE"/>
    <property type="match status" value="1"/>
</dbReference>
<dbReference type="PANTHER" id="PTHR12684:SF2">
    <property type="entry name" value="TRNA 2'-PHOSPHOTRANSFERASE 1"/>
    <property type="match status" value="1"/>
</dbReference>
<dbReference type="Pfam" id="PF01885">
    <property type="entry name" value="PTS_2-RNA"/>
    <property type="match status" value="1"/>
</dbReference>
<dbReference type="SUPFAM" id="SSF56399">
    <property type="entry name" value="ADP-ribosylation"/>
    <property type="match status" value="1"/>
</dbReference>
<feature type="chain" id="PRO_0000157491" description="Probable RNA 2'-phosphotransferase">
    <location>
        <begin position="1"/>
        <end position="213"/>
    </location>
</feature>
<keyword id="KW-0520">NAD</keyword>
<keyword id="KW-1185">Reference proteome</keyword>
<keyword id="KW-0808">Transferase</keyword>
<sequence length="213" mass="23452">MNDVYKCPVCGQLTESPTHCGVSAVKILDGAMRLKISKLLSLALRHSPSVLGLSLDKGGWADVKTALEGLRKAGIRADYEALYAVVALDEKGRFELKDGKIRARYGHTIDVEVEYEADSESKVLYHGTSRHLLPSIMAQGLLPMRRRYVHLSPDFATACQNARRRPLPVVIEIDAECLRARGYVVYAASGKVRLAKHVPPECLKKVVDCPTPS</sequence>
<accession>Q8ZSP2</accession>
<organism>
    <name type="scientific">Pyrobaculum aerophilum (strain ATCC 51768 / DSM 7523 / JCM 9630 / CIP 104966 / NBRC 100827 / IM2)</name>
    <dbReference type="NCBI Taxonomy" id="178306"/>
    <lineage>
        <taxon>Archaea</taxon>
        <taxon>Thermoproteota</taxon>
        <taxon>Thermoprotei</taxon>
        <taxon>Thermoproteales</taxon>
        <taxon>Thermoproteaceae</taxon>
        <taxon>Pyrobaculum</taxon>
    </lineage>
</organism>
<protein>
    <recommendedName>
        <fullName evidence="1">Probable RNA 2'-phosphotransferase</fullName>
        <ecNumber evidence="1">2.7.1.-</ecNumber>
    </recommendedName>
</protein>
<proteinExistence type="inferred from homology"/>